<geneLocation type="mitochondrion"/>
<name>COX2_ALOPA</name>
<keyword id="KW-0186">Copper</keyword>
<keyword id="KW-0249">Electron transport</keyword>
<keyword id="KW-0460">Magnesium</keyword>
<keyword id="KW-0472">Membrane</keyword>
<keyword id="KW-0479">Metal-binding</keyword>
<keyword id="KW-0496">Mitochondrion</keyword>
<keyword id="KW-0999">Mitochondrion inner membrane</keyword>
<keyword id="KW-0679">Respiratory chain</keyword>
<keyword id="KW-1278">Translocase</keyword>
<keyword id="KW-0812">Transmembrane</keyword>
<keyword id="KW-1133">Transmembrane helix</keyword>
<keyword id="KW-0813">Transport</keyword>
<protein>
    <recommendedName>
        <fullName>Cytochrome c oxidase subunit 2</fullName>
        <ecNumber>7.1.1.9</ecNumber>
    </recommendedName>
    <alternativeName>
        <fullName>Cytochrome c oxidase polypeptide II</fullName>
    </alternativeName>
</protein>
<gene>
    <name type="primary">MT-CO2</name>
    <name type="synonym">COII</name>
    <name type="synonym">COXII</name>
    <name type="synonym">MTCO2</name>
</gene>
<proteinExistence type="inferred from homology"/>
<dbReference type="EC" id="7.1.1.9"/>
<dbReference type="EMBL" id="L22774">
    <property type="protein sequence ID" value="AAA20562.1"/>
    <property type="molecule type" value="Genomic_DNA"/>
</dbReference>
<dbReference type="PIR" id="I36906">
    <property type="entry name" value="I36906"/>
</dbReference>
<dbReference type="SMR" id="P98024"/>
<dbReference type="GO" id="GO:0005743">
    <property type="term" value="C:mitochondrial inner membrane"/>
    <property type="evidence" value="ECO:0007669"/>
    <property type="project" value="UniProtKB-SubCell"/>
</dbReference>
<dbReference type="GO" id="GO:0045277">
    <property type="term" value="C:respiratory chain complex IV"/>
    <property type="evidence" value="ECO:0000250"/>
    <property type="project" value="UniProtKB"/>
</dbReference>
<dbReference type="GO" id="GO:0005507">
    <property type="term" value="F:copper ion binding"/>
    <property type="evidence" value="ECO:0007669"/>
    <property type="project" value="InterPro"/>
</dbReference>
<dbReference type="GO" id="GO:0004129">
    <property type="term" value="F:cytochrome-c oxidase activity"/>
    <property type="evidence" value="ECO:0007669"/>
    <property type="project" value="UniProtKB-EC"/>
</dbReference>
<dbReference type="GO" id="GO:0042773">
    <property type="term" value="P:ATP synthesis coupled electron transport"/>
    <property type="evidence" value="ECO:0007669"/>
    <property type="project" value="TreeGrafter"/>
</dbReference>
<dbReference type="CDD" id="cd13912">
    <property type="entry name" value="CcO_II_C"/>
    <property type="match status" value="1"/>
</dbReference>
<dbReference type="FunFam" id="1.10.287.90:FF:000001">
    <property type="entry name" value="Cytochrome c oxidase subunit 2"/>
    <property type="match status" value="1"/>
</dbReference>
<dbReference type="FunFam" id="2.60.40.420:FF:000001">
    <property type="entry name" value="Cytochrome c oxidase subunit 2"/>
    <property type="match status" value="1"/>
</dbReference>
<dbReference type="Gene3D" id="1.10.287.90">
    <property type="match status" value="1"/>
</dbReference>
<dbReference type="Gene3D" id="2.60.40.420">
    <property type="entry name" value="Cupredoxins - blue copper proteins"/>
    <property type="match status" value="1"/>
</dbReference>
<dbReference type="InterPro" id="IPR045187">
    <property type="entry name" value="CcO_II"/>
</dbReference>
<dbReference type="InterPro" id="IPR002429">
    <property type="entry name" value="CcO_II-like_C"/>
</dbReference>
<dbReference type="InterPro" id="IPR034210">
    <property type="entry name" value="CcO_II_C"/>
</dbReference>
<dbReference type="InterPro" id="IPR001505">
    <property type="entry name" value="Copper_CuA"/>
</dbReference>
<dbReference type="InterPro" id="IPR008972">
    <property type="entry name" value="Cupredoxin"/>
</dbReference>
<dbReference type="InterPro" id="IPR014222">
    <property type="entry name" value="Cyt_c_oxidase_su2"/>
</dbReference>
<dbReference type="InterPro" id="IPR011759">
    <property type="entry name" value="Cyt_c_oxidase_su2_TM_dom"/>
</dbReference>
<dbReference type="InterPro" id="IPR036257">
    <property type="entry name" value="Cyt_c_oxidase_su2_TM_sf"/>
</dbReference>
<dbReference type="NCBIfam" id="TIGR02866">
    <property type="entry name" value="CoxB"/>
    <property type="match status" value="1"/>
</dbReference>
<dbReference type="PANTHER" id="PTHR22888:SF9">
    <property type="entry name" value="CYTOCHROME C OXIDASE SUBUNIT 2"/>
    <property type="match status" value="1"/>
</dbReference>
<dbReference type="PANTHER" id="PTHR22888">
    <property type="entry name" value="CYTOCHROME C OXIDASE, SUBUNIT II"/>
    <property type="match status" value="1"/>
</dbReference>
<dbReference type="Pfam" id="PF00116">
    <property type="entry name" value="COX2"/>
    <property type="match status" value="1"/>
</dbReference>
<dbReference type="Pfam" id="PF02790">
    <property type="entry name" value="COX2_TM"/>
    <property type="match status" value="1"/>
</dbReference>
<dbReference type="PRINTS" id="PR01166">
    <property type="entry name" value="CYCOXIDASEII"/>
</dbReference>
<dbReference type="SUPFAM" id="SSF49503">
    <property type="entry name" value="Cupredoxins"/>
    <property type="match status" value="1"/>
</dbReference>
<dbReference type="SUPFAM" id="SSF81464">
    <property type="entry name" value="Cytochrome c oxidase subunit II-like, transmembrane region"/>
    <property type="match status" value="1"/>
</dbReference>
<dbReference type="PROSITE" id="PS00078">
    <property type="entry name" value="COX2"/>
    <property type="match status" value="1"/>
</dbReference>
<dbReference type="PROSITE" id="PS50857">
    <property type="entry name" value="COX2_CUA"/>
    <property type="match status" value="1"/>
</dbReference>
<dbReference type="PROSITE" id="PS50999">
    <property type="entry name" value="COX2_TM"/>
    <property type="match status" value="1"/>
</dbReference>
<reference key="1">
    <citation type="journal article" date="1994" name="J. Mol. Evol.">
        <title>Evolution of the primate cytochrome c oxidase subunit II gene.</title>
        <authorList>
            <person name="Adkins R.M."/>
            <person name="Honeycutt R.L."/>
        </authorList>
    </citation>
    <scope>NUCLEOTIDE SEQUENCE [GENOMIC DNA]</scope>
</reference>
<accession>P98024</accession>
<evidence type="ECO:0000250" key="1">
    <source>
        <dbReference type="UniProtKB" id="P00403"/>
    </source>
</evidence>
<evidence type="ECO:0000250" key="2">
    <source>
        <dbReference type="UniProtKB" id="P00410"/>
    </source>
</evidence>
<evidence type="ECO:0000250" key="3">
    <source>
        <dbReference type="UniProtKB" id="P68530"/>
    </source>
</evidence>
<evidence type="ECO:0000305" key="4"/>
<sequence>MAHPAQLGLQNATSPIMEELIAFHDHALMIIFLISSLVLYVISLMLTTKLTHTSTMNAQEIEMIWTILPAIILIMIALPSLRILYMTDEFNKPYLTLKAIGHQWYWSYEYSDYEDLAFDSYITPTYFLEPGEFRLLEVDNRTTLPMEADIRMLISSQDVLHSWAVPSLGVKADAIPGRLNQVMLASMRPGLFYGQCSEICGSNHSFMPIVLEFIYFQDFEVWASYLYIVSL</sequence>
<comment type="function">
    <text evidence="2">Component of the cytochrome c oxidase, the last enzyme in the mitochondrial electron transport chain which drives oxidative phosphorylation. The respiratory chain contains 3 multisubunit complexes succinate dehydrogenase (complex II, CII), ubiquinol-cytochrome c oxidoreductase (cytochrome b-c1 complex, complex III, CIII) and cytochrome c oxidase (complex IV, CIV), that cooperate to transfer electrons derived from NADH and succinate to molecular oxygen, creating an electrochemical gradient over the inner membrane that drives transmembrane transport and the ATP synthase. Cytochrome c oxidase is the component of the respiratory chain that catalyzes the reduction of oxygen to water. Electrons originating from reduced cytochrome c in the intermembrane space (IMS) are transferred via the dinuclear copper A center (CU(A)) of subunit 2 and heme A of subunit 1 to the active site in subunit 1, a binuclear center (BNC) formed by heme A3 and copper B (CU(B)). The BNC reduces molecular oxygen to 2 water molecules using 4 electrons from cytochrome c in the IMS and 4 protons from the mitochondrial matrix.</text>
</comment>
<comment type="catalytic activity">
    <reaction evidence="2">
        <text>4 Fe(II)-[cytochrome c] + O2 + 8 H(+)(in) = 4 Fe(III)-[cytochrome c] + 2 H2O + 4 H(+)(out)</text>
        <dbReference type="Rhea" id="RHEA:11436"/>
        <dbReference type="Rhea" id="RHEA-COMP:10350"/>
        <dbReference type="Rhea" id="RHEA-COMP:14399"/>
        <dbReference type="ChEBI" id="CHEBI:15377"/>
        <dbReference type="ChEBI" id="CHEBI:15378"/>
        <dbReference type="ChEBI" id="CHEBI:15379"/>
        <dbReference type="ChEBI" id="CHEBI:29033"/>
        <dbReference type="ChEBI" id="CHEBI:29034"/>
        <dbReference type="EC" id="7.1.1.9"/>
    </reaction>
    <physiologicalReaction direction="left-to-right" evidence="2">
        <dbReference type="Rhea" id="RHEA:11437"/>
    </physiologicalReaction>
</comment>
<comment type="cofactor">
    <cofactor evidence="3">
        <name>Cu cation</name>
        <dbReference type="ChEBI" id="CHEBI:23378"/>
    </cofactor>
    <text evidence="3">Binds a dinuclear copper A center per subunit.</text>
</comment>
<comment type="subunit">
    <text evidence="1 3">Component of the cytochrome c oxidase (complex IV, CIV), a multisubunit enzyme composed of 14 subunits. The complex is composed of a catalytic core of 3 subunits MT-CO1, MT-CO2 and MT-CO3, encoded in the mitochondrial DNA, and 11 supernumerary subunits COX4I, COX5A, COX5B, COX6A, COX6B, COX6C, COX7A, COX7B, COX7C, COX8 and NDUFA4, which are encoded in the nuclear genome. The complex exists as a monomer or a dimer and forms supercomplexes (SCs) in the inner mitochondrial membrane with NADH-ubiquinone oxidoreductase (complex I, CI) and ubiquinol-cytochrome c oxidoreductase (cytochrome b-c1 complex, complex III, CIII), resulting in different assemblies (supercomplex SCI(1)III(2)IV(1) and megacomplex MCI(2)III(2)IV(2)) (By similarity). Found in a complex with TMEM177, COA6, COX18, COX20, SCO1 and SCO2. Interacts with TMEM177 in a COX20-dependent manner. Interacts with COX20. Interacts with COX16 (By similarity).</text>
</comment>
<comment type="subcellular location">
    <subcellularLocation>
        <location evidence="3">Mitochondrion inner membrane</location>
        <topology evidence="3">Multi-pass membrane protein</topology>
    </subcellularLocation>
</comment>
<comment type="similarity">
    <text evidence="4">Belongs to the cytochrome c oxidase subunit 2 family.</text>
</comment>
<organism>
    <name type="scientific">Alouatta palliata</name>
    <name type="common">Mantled howler monkey</name>
    <dbReference type="NCBI Taxonomy" id="30589"/>
    <lineage>
        <taxon>Eukaryota</taxon>
        <taxon>Metazoa</taxon>
        <taxon>Chordata</taxon>
        <taxon>Craniata</taxon>
        <taxon>Vertebrata</taxon>
        <taxon>Euteleostomi</taxon>
        <taxon>Mammalia</taxon>
        <taxon>Eutheria</taxon>
        <taxon>Euarchontoglires</taxon>
        <taxon>Primates</taxon>
        <taxon>Haplorrhini</taxon>
        <taxon>Platyrrhini</taxon>
        <taxon>Atelidae</taxon>
        <taxon>Alouattinae</taxon>
        <taxon>Alouatta</taxon>
    </lineage>
</organism>
<feature type="chain" id="PRO_0000183490" description="Cytochrome c oxidase subunit 2">
    <location>
        <begin position="1"/>
        <end position="231"/>
    </location>
</feature>
<feature type="topological domain" description="Mitochondrial intermembrane" evidence="3">
    <location>
        <begin position="1"/>
        <end position="14"/>
    </location>
</feature>
<feature type="transmembrane region" description="Helical; Name=I" evidence="3">
    <location>
        <begin position="15"/>
        <end position="45"/>
    </location>
</feature>
<feature type="topological domain" description="Mitochondrial matrix" evidence="3">
    <location>
        <begin position="46"/>
        <end position="59"/>
    </location>
</feature>
<feature type="transmembrane region" description="Helical; Name=II" evidence="3">
    <location>
        <begin position="60"/>
        <end position="87"/>
    </location>
</feature>
<feature type="topological domain" description="Mitochondrial intermembrane" evidence="3">
    <location>
        <begin position="88"/>
        <end position="231"/>
    </location>
</feature>
<feature type="binding site" evidence="3">
    <location>
        <position position="161"/>
    </location>
    <ligand>
        <name>Cu cation</name>
        <dbReference type="ChEBI" id="CHEBI:23378"/>
        <label>A1</label>
    </ligand>
</feature>
<feature type="binding site" evidence="3">
    <location>
        <position position="196"/>
    </location>
    <ligand>
        <name>Cu cation</name>
        <dbReference type="ChEBI" id="CHEBI:23378"/>
        <label>A1</label>
    </ligand>
</feature>
<feature type="binding site" evidence="3">
    <location>
        <position position="196"/>
    </location>
    <ligand>
        <name>Cu cation</name>
        <dbReference type="ChEBI" id="CHEBI:23378"/>
        <label>A2</label>
    </ligand>
</feature>
<feature type="binding site" evidence="3">
    <location>
        <position position="198"/>
    </location>
    <ligand>
        <name>Cu cation</name>
        <dbReference type="ChEBI" id="CHEBI:23378"/>
        <label>A2</label>
    </ligand>
</feature>
<feature type="binding site" evidence="3">
    <location>
        <position position="198"/>
    </location>
    <ligand>
        <name>Mg(2+)</name>
        <dbReference type="ChEBI" id="CHEBI:18420"/>
        <note>ligand shared with MT-CO1</note>
    </ligand>
</feature>
<feature type="binding site" evidence="3">
    <location>
        <position position="200"/>
    </location>
    <ligand>
        <name>Cu cation</name>
        <dbReference type="ChEBI" id="CHEBI:23378"/>
        <label>A1</label>
    </ligand>
</feature>
<feature type="binding site" evidence="3">
    <location>
        <position position="200"/>
    </location>
    <ligand>
        <name>Cu cation</name>
        <dbReference type="ChEBI" id="CHEBI:23378"/>
        <label>A2</label>
    </ligand>
</feature>
<feature type="binding site" evidence="3">
    <location>
        <position position="204"/>
    </location>
    <ligand>
        <name>Cu cation</name>
        <dbReference type="ChEBI" id="CHEBI:23378"/>
        <label>A2</label>
    </ligand>
</feature>
<feature type="binding site" evidence="3">
    <location>
        <position position="207"/>
    </location>
    <ligand>
        <name>Cu cation</name>
        <dbReference type="ChEBI" id="CHEBI:23378"/>
        <label>A1</label>
    </ligand>
</feature>